<keyword id="KW-0520">NAD</keyword>
<keyword id="KW-0560">Oxidoreductase</keyword>
<keyword id="KW-1185">Reference proteome</keyword>
<keyword id="KW-0816">Tricarboxylic acid cycle</keyword>
<proteinExistence type="inferred from homology"/>
<evidence type="ECO:0000255" key="1">
    <source>
        <dbReference type="HAMAP-Rule" id="MF_01517"/>
    </source>
</evidence>
<sequence>MVSQTVSVAVTGGTGQIAYSFLFSLAHGDVFGLDCGIDLRIYDIPGTERALSGVRMELDDGAFPLLQRVQVTTSLHDAFDGIDAAFLIGSVPRGPGMERRDLLKKNGEIFATQGKALNTTAKRDAKIFVVGNPVNTNCWIAMNHAPRLLRKNFHAMLRLDQNRMHSMLSHRAEVPLSAVSQVVVWGNHSAKQVPDFTQALINDRPIAETIADRDWLENIMVPSVQSRGSAVIEARGKSSAASAARALAEAARSIYQPKEGEWFSSGVCSDHNPYGLPEDLIFGFPCRMLATGEYEVIPRLPWDAFIRGKMQISLDEILQEKASVSL</sequence>
<protein>
    <recommendedName>
        <fullName evidence="1">Malate dehydrogenase</fullName>
        <ecNumber evidence="1">1.1.1.37</ecNumber>
    </recommendedName>
</protein>
<name>MDH_CHLTR</name>
<organism>
    <name type="scientific">Chlamydia trachomatis serovar D (strain ATCC VR-885 / DSM 19411 / UW-3/Cx)</name>
    <dbReference type="NCBI Taxonomy" id="272561"/>
    <lineage>
        <taxon>Bacteria</taxon>
        <taxon>Pseudomonadati</taxon>
        <taxon>Chlamydiota</taxon>
        <taxon>Chlamydiia</taxon>
        <taxon>Chlamydiales</taxon>
        <taxon>Chlamydiaceae</taxon>
        <taxon>Chlamydia/Chlamydophila group</taxon>
        <taxon>Chlamydia</taxon>
    </lineage>
</organism>
<dbReference type="EC" id="1.1.1.37" evidence="1"/>
<dbReference type="EMBL" id="AE001273">
    <property type="protein sequence ID" value="AAC67972.1"/>
    <property type="molecule type" value="Genomic_DNA"/>
</dbReference>
<dbReference type="PIR" id="D71521">
    <property type="entry name" value="D71521"/>
</dbReference>
<dbReference type="RefSeq" id="NP_219885.1">
    <property type="nucleotide sequence ID" value="NC_000117.1"/>
</dbReference>
<dbReference type="RefSeq" id="WP_009871729.1">
    <property type="nucleotide sequence ID" value="NC_000117.1"/>
</dbReference>
<dbReference type="SMR" id="O84381"/>
<dbReference type="STRING" id="272561.CT_376"/>
<dbReference type="EnsemblBacteria" id="AAC67972">
    <property type="protein sequence ID" value="AAC67972"/>
    <property type="gene ID" value="CT_376"/>
</dbReference>
<dbReference type="GeneID" id="884741"/>
<dbReference type="KEGG" id="ctr:CT_376"/>
<dbReference type="PATRIC" id="fig|272561.5.peg.405"/>
<dbReference type="HOGENOM" id="CLU_040727_2_0_0"/>
<dbReference type="InParanoid" id="O84381"/>
<dbReference type="OrthoDB" id="9802969at2"/>
<dbReference type="BioCyc" id="MetaCyc:CT_376-MONOMER"/>
<dbReference type="Proteomes" id="UP000000431">
    <property type="component" value="Chromosome"/>
</dbReference>
<dbReference type="GO" id="GO:0030060">
    <property type="term" value="F:L-malate dehydrogenase (NAD+) activity"/>
    <property type="evidence" value="ECO:0000318"/>
    <property type="project" value="GO_Central"/>
</dbReference>
<dbReference type="GO" id="GO:0006108">
    <property type="term" value="P:malate metabolic process"/>
    <property type="evidence" value="ECO:0000318"/>
    <property type="project" value="GO_Central"/>
</dbReference>
<dbReference type="GO" id="GO:0006734">
    <property type="term" value="P:NADH metabolic process"/>
    <property type="evidence" value="ECO:0000318"/>
    <property type="project" value="GO_Central"/>
</dbReference>
<dbReference type="GO" id="GO:0006107">
    <property type="term" value="P:oxaloacetate metabolic process"/>
    <property type="evidence" value="ECO:0000318"/>
    <property type="project" value="GO_Central"/>
</dbReference>
<dbReference type="GO" id="GO:0006099">
    <property type="term" value="P:tricarboxylic acid cycle"/>
    <property type="evidence" value="ECO:0000318"/>
    <property type="project" value="GO_Central"/>
</dbReference>
<dbReference type="FunFam" id="3.40.50.720:FF:000010">
    <property type="entry name" value="Malate dehydrogenase"/>
    <property type="match status" value="1"/>
</dbReference>
<dbReference type="FunFam" id="3.90.110.10:FF:000002">
    <property type="entry name" value="Malate dehydrogenase"/>
    <property type="match status" value="1"/>
</dbReference>
<dbReference type="Gene3D" id="3.90.110.10">
    <property type="entry name" value="Lactate dehydrogenase/glycoside hydrolase, family 4, C-terminal"/>
    <property type="match status" value="1"/>
</dbReference>
<dbReference type="Gene3D" id="3.40.50.720">
    <property type="entry name" value="NAD(P)-binding Rossmann-like Domain"/>
    <property type="match status" value="1"/>
</dbReference>
<dbReference type="HAMAP" id="MF_01517">
    <property type="entry name" value="Malate_dehydrog_2"/>
    <property type="match status" value="1"/>
</dbReference>
<dbReference type="InterPro" id="IPR001557">
    <property type="entry name" value="L-lactate/malate_DH"/>
</dbReference>
<dbReference type="InterPro" id="IPR022383">
    <property type="entry name" value="Lactate/malate_DH_C"/>
</dbReference>
<dbReference type="InterPro" id="IPR001236">
    <property type="entry name" value="Lactate/malate_DH_N"/>
</dbReference>
<dbReference type="InterPro" id="IPR015955">
    <property type="entry name" value="Lactate_DH/Glyco_Ohase_4_C"/>
</dbReference>
<dbReference type="InterPro" id="IPR010945">
    <property type="entry name" value="Malate_DH_type2"/>
</dbReference>
<dbReference type="InterPro" id="IPR036291">
    <property type="entry name" value="NAD(P)-bd_dom_sf"/>
</dbReference>
<dbReference type="NCBIfam" id="TIGR01759">
    <property type="entry name" value="MalateDH-SF1"/>
    <property type="match status" value="1"/>
</dbReference>
<dbReference type="NCBIfam" id="NF003916">
    <property type="entry name" value="PRK05442.1"/>
    <property type="match status" value="1"/>
</dbReference>
<dbReference type="PANTHER" id="PTHR23382">
    <property type="entry name" value="MALATE DEHYDROGENASE"/>
    <property type="match status" value="1"/>
</dbReference>
<dbReference type="Pfam" id="PF02866">
    <property type="entry name" value="Ldh_1_C"/>
    <property type="match status" value="1"/>
</dbReference>
<dbReference type="Pfam" id="PF00056">
    <property type="entry name" value="Ldh_1_N"/>
    <property type="match status" value="1"/>
</dbReference>
<dbReference type="PIRSF" id="PIRSF000102">
    <property type="entry name" value="Lac_mal_DH"/>
    <property type="match status" value="1"/>
</dbReference>
<dbReference type="SUPFAM" id="SSF56327">
    <property type="entry name" value="LDH C-terminal domain-like"/>
    <property type="match status" value="1"/>
</dbReference>
<dbReference type="SUPFAM" id="SSF51735">
    <property type="entry name" value="NAD(P)-binding Rossmann-fold domains"/>
    <property type="match status" value="1"/>
</dbReference>
<reference key="1">
    <citation type="journal article" date="1998" name="Science">
        <title>Genome sequence of an obligate intracellular pathogen of humans: Chlamydia trachomatis.</title>
        <authorList>
            <person name="Stephens R.S."/>
            <person name="Kalman S."/>
            <person name="Lammel C.J."/>
            <person name="Fan J."/>
            <person name="Marathe R."/>
            <person name="Aravind L."/>
            <person name="Mitchell W.P."/>
            <person name="Olinger L."/>
            <person name="Tatusov R.L."/>
            <person name="Zhao Q."/>
            <person name="Koonin E.V."/>
            <person name="Davis R.W."/>
        </authorList>
    </citation>
    <scope>NUCLEOTIDE SEQUENCE [LARGE SCALE GENOMIC DNA]</scope>
    <source>
        <strain>ATCC VR-885 / DSM 19411 / UW-3/Cx</strain>
    </source>
</reference>
<gene>
    <name evidence="1" type="primary">mdh</name>
    <name type="synonym">mdhC</name>
    <name type="ordered locus">CT_376</name>
</gene>
<accession>O84381</accession>
<feature type="chain" id="PRO_0000113359" description="Malate dehydrogenase">
    <location>
        <begin position="1"/>
        <end position="326"/>
    </location>
</feature>
<feature type="active site" description="Proton acceptor" evidence="1">
    <location>
        <position position="188"/>
    </location>
</feature>
<feature type="binding site" evidence="1">
    <location>
        <begin position="12"/>
        <end position="18"/>
    </location>
    <ligand>
        <name>NAD(+)</name>
        <dbReference type="ChEBI" id="CHEBI:57540"/>
    </ligand>
</feature>
<feature type="binding site" evidence="1">
    <location>
        <position position="93"/>
    </location>
    <ligand>
        <name>substrate</name>
    </ligand>
</feature>
<feature type="binding site" evidence="1">
    <location>
        <position position="99"/>
    </location>
    <ligand>
        <name>substrate</name>
    </ligand>
</feature>
<feature type="binding site" evidence="1">
    <location>
        <position position="106"/>
    </location>
    <ligand>
        <name>NAD(+)</name>
        <dbReference type="ChEBI" id="CHEBI:57540"/>
    </ligand>
</feature>
<feature type="binding site" evidence="1">
    <location>
        <position position="113"/>
    </location>
    <ligand>
        <name>NAD(+)</name>
        <dbReference type="ChEBI" id="CHEBI:57540"/>
    </ligand>
</feature>
<feature type="binding site" evidence="1">
    <location>
        <begin position="130"/>
        <end position="132"/>
    </location>
    <ligand>
        <name>NAD(+)</name>
        <dbReference type="ChEBI" id="CHEBI:57540"/>
    </ligand>
</feature>
<feature type="binding site" evidence="1">
    <location>
        <position position="132"/>
    </location>
    <ligand>
        <name>substrate</name>
    </ligand>
</feature>
<feature type="binding site" evidence="1">
    <location>
        <position position="163"/>
    </location>
    <ligand>
        <name>substrate</name>
    </ligand>
</feature>
<comment type="function">
    <text evidence="1">Catalyzes the reversible oxidation of malate to oxaloacetate.</text>
</comment>
<comment type="catalytic activity">
    <reaction evidence="1">
        <text>(S)-malate + NAD(+) = oxaloacetate + NADH + H(+)</text>
        <dbReference type="Rhea" id="RHEA:21432"/>
        <dbReference type="ChEBI" id="CHEBI:15378"/>
        <dbReference type="ChEBI" id="CHEBI:15589"/>
        <dbReference type="ChEBI" id="CHEBI:16452"/>
        <dbReference type="ChEBI" id="CHEBI:57540"/>
        <dbReference type="ChEBI" id="CHEBI:57945"/>
        <dbReference type="EC" id="1.1.1.37"/>
    </reaction>
</comment>
<comment type="similarity">
    <text evidence="1">Belongs to the LDH/MDH superfamily. MDH type 2 family.</text>
</comment>